<evidence type="ECO:0000255" key="1">
    <source>
        <dbReference type="HAMAP-Rule" id="MF_00639"/>
    </source>
</evidence>
<organism>
    <name type="scientific">Psychrobacter cryohalolentis (strain ATCC BAA-1226 / DSM 17306 / VKM B-2378 / K5)</name>
    <dbReference type="NCBI Taxonomy" id="335284"/>
    <lineage>
        <taxon>Bacteria</taxon>
        <taxon>Pseudomonadati</taxon>
        <taxon>Pseudomonadota</taxon>
        <taxon>Gammaproteobacteria</taxon>
        <taxon>Moraxellales</taxon>
        <taxon>Moraxellaceae</taxon>
        <taxon>Psychrobacter</taxon>
    </lineage>
</organism>
<dbReference type="EC" id="6.3.2.9" evidence="1"/>
<dbReference type="EMBL" id="CP000323">
    <property type="protein sequence ID" value="ABE76120.1"/>
    <property type="molecule type" value="Genomic_DNA"/>
</dbReference>
<dbReference type="RefSeq" id="WP_011514648.1">
    <property type="nucleotide sequence ID" value="NC_007969.1"/>
</dbReference>
<dbReference type="SMR" id="Q1Q883"/>
<dbReference type="STRING" id="335284.Pcryo_2343"/>
<dbReference type="KEGG" id="pcr:Pcryo_2343"/>
<dbReference type="eggNOG" id="COG0771">
    <property type="taxonomic scope" value="Bacteria"/>
</dbReference>
<dbReference type="HOGENOM" id="CLU_032540_1_0_6"/>
<dbReference type="UniPathway" id="UPA00219"/>
<dbReference type="Proteomes" id="UP000002425">
    <property type="component" value="Chromosome"/>
</dbReference>
<dbReference type="GO" id="GO:0005737">
    <property type="term" value="C:cytoplasm"/>
    <property type="evidence" value="ECO:0007669"/>
    <property type="project" value="UniProtKB-SubCell"/>
</dbReference>
<dbReference type="GO" id="GO:0005524">
    <property type="term" value="F:ATP binding"/>
    <property type="evidence" value="ECO:0007669"/>
    <property type="project" value="UniProtKB-UniRule"/>
</dbReference>
<dbReference type="GO" id="GO:0008764">
    <property type="term" value="F:UDP-N-acetylmuramoylalanine-D-glutamate ligase activity"/>
    <property type="evidence" value="ECO:0007669"/>
    <property type="project" value="UniProtKB-UniRule"/>
</dbReference>
<dbReference type="GO" id="GO:0051301">
    <property type="term" value="P:cell division"/>
    <property type="evidence" value="ECO:0007669"/>
    <property type="project" value="UniProtKB-KW"/>
</dbReference>
<dbReference type="GO" id="GO:0071555">
    <property type="term" value="P:cell wall organization"/>
    <property type="evidence" value="ECO:0007669"/>
    <property type="project" value="UniProtKB-KW"/>
</dbReference>
<dbReference type="GO" id="GO:0009252">
    <property type="term" value="P:peptidoglycan biosynthetic process"/>
    <property type="evidence" value="ECO:0007669"/>
    <property type="project" value="UniProtKB-UniRule"/>
</dbReference>
<dbReference type="GO" id="GO:0008360">
    <property type="term" value="P:regulation of cell shape"/>
    <property type="evidence" value="ECO:0007669"/>
    <property type="project" value="UniProtKB-KW"/>
</dbReference>
<dbReference type="Gene3D" id="3.90.190.20">
    <property type="entry name" value="Mur ligase, C-terminal domain"/>
    <property type="match status" value="1"/>
</dbReference>
<dbReference type="Gene3D" id="3.40.1190.10">
    <property type="entry name" value="Mur-like, catalytic domain"/>
    <property type="match status" value="1"/>
</dbReference>
<dbReference type="Gene3D" id="3.40.50.720">
    <property type="entry name" value="NAD(P)-binding Rossmann-like Domain"/>
    <property type="match status" value="1"/>
</dbReference>
<dbReference type="HAMAP" id="MF_00639">
    <property type="entry name" value="MurD"/>
    <property type="match status" value="1"/>
</dbReference>
<dbReference type="InterPro" id="IPR036565">
    <property type="entry name" value="Mur-like_cat_sf"/>
</dbReference>
<dbReference type="InterPro" id="IPR004101">
    <property type="entry name" value="Mur_ligase_C"/>
</dbReference>
<dbReference type="InterPro" id="IPR036615">
    <property type="entry name" value="Mur_ligase_C_dom_sf"/>
</dbReference>
<dbReference type="InterPro" id="IPR013221">
    <property type="entry name" value="Mur_ligase_cen"/>
</dbReference>
<dbReference type="InterPro" id="IPR005762">
    <property type="entry name" value="MurD"/>
</dbReference>
<dbReference type="NCBIfam" id="TIGR01087">
    <property type="entry name" value="murD"/>
    <property type="match status" value="1"/>
</dbReference>
<dbReference type="PANTHER" id="PTHR43692">
    <property type="entry name" value="UDP-N-ACETYLMURAMOYLALANINE--D-GLUTAMATE LIGASE"/>
    <property type="match status" value="1"/>
</dbReference>
<dbReference type="PANTHER" id="PTHR43692:SF1">
    <property type="entry name" value="UDP-N-ACETYLMURAMOYLALANINE--D-GLUTAMATE LIGASE"/>
    <property type="match status" value="1"/>
</dbReference>
<dbReference type="Pfam" id="PF02875">
    <property type="entry name" value="Mur_ligase_C"/>
    <property type="match status" value="1"/>
</dbReference>
<dbReference type="Pfam" id="PF08245">
    <property type="entry name" value="Mur_ligase_M"/>
    <property type="match status" value="1"/>
</dbReference>
<dbReference type="Pfam" id="PF21799">
    <property type="entry name" value="MurD-like_N"/>
    <property type="match status" value="1"/>
</dbReference>
<dbReference type="SUPFAM" id="SSF51984">
    <property type="entry name" value="MurCD N-terminal domain"/>
    <property type="match status" value="1"/>
</dbReference>
<dbReference type="SUPFAM" id="SSF53623">
    <property type="entry name" value="MurD-like peptide ligases, catalytic domain"/>
    <property type="match status" value="1"/>
</dbReference>
<dbReference type="SUPFAM" id="SSF53244">
    <property type="entry name" value="MurD-like peptide ligases, peptide-binding domain"/>
    <property type="match status" value="1"/>
</dbReference>
<feature type="chain" id="PRO_0000257220" description="UDP-N-acetylmuramoylalanine--D-glutamate ligase">
    <location>
        <begin position="1"/>
        <end position="471"/>
    </location>
</feature>
<feature type="binding site" evidence="1">
    <location>
        <begin position="122"/>
        <end position="128"/>
    </location>
    <ligand>
        <name>ATP</name>
        <dbReference type="ChEBI" id="CHEBI:30616"/>
    </ligand>
</feature>
<sequence>MTASTATETLLHKGSGLQVVVGLGQSGLSVAHYLAEQGYQVAVTDNQENPALANKLPATIDIRQFGAIDAELLQQAARIIISPGISLDNVAIAAARAANIPVVSDIQLFCEACTVPIVAITGSNAKSTVTTLVGQMAADAGINVGVGGNIGVPALSLLSNKEMELAVIELSSFQLETVTNLGAQVATVLNMSPDHLDRHGDMLGYHQAKHRIFQGAKSVVINREDALTRPLVSDSLPRLSTGIHAPNKGHYGLITDTAGQTYLARGTERLISADKLKIKGRHNLLNAQAALALGELAGLPLEIMLITLQQFAGLEHRCQYVSTVAGIDYFNDSKGTNIGSTMAAVEGLGAVYAPKDGKLLLILGGQGKGQQFGELSPFINQYVSQVLFIGEDGKQIEQHLRAAGLSDEVSLHQCQTLENAFATIEQVTASSLSQVQAVLLSPACASFDQFDGFVARGEHFSQLVKQLDVVS</sequence>
<gene>
    <name evidence="1" type="primary">murD</name>
    <name type="ordered locus">Pcryo_2343</name>
</gene>
<reference key="1">
    <citation type="submission" date="2006-03" db="EMBL/GenBank/DDBJ databases">
        <title>Complete sequence of chromosome of Psychrobacter cryohalolentis K5.</title>
        <authorList>
            <consortium name="US DOE Joint Genome Institute"/>
            <person name="Copeland A."/>
            <person name="Lucas S."/>
            <person name="Lapidus A."/>
            <person name="Barry K."/>
            <person name="Detter J.C."/>
            <person name="Glavina T."/>
            <person name="Hammon N."/>
            <person name="Israni S."/>
            <person name="Dalin E."/>
            <person name="Tice H."/>
            <person name="Pitluck S."/>
            <person name="Brettin T."/>
            <person name="Bruce D."/>
            <person name="Han C."/>
            <person name="Tapia R."/>
            <person name="Sims D.R."/>
            <person name="Gilna P."/>
            <person name="Schmutz J."/>
            <person name="Larimer F."/>
            <person name="Land M."/>
            <person name="Hauser L."/>
            <person name="Kyrpides N."/>
            <person name="Kim E."/>
            <person name="Richardson P."/>
        </authorList>
    </citation>
    <scope>NUCLEOTIDE SEQUENCE [LARGE SCALE GENOMIC DNA]</scope>
    <source>
        <strain>ATCC BAA-1226 / DSM 17306 / VKM B-2378 / K5</strain>
    </source>
</reference>
<keyword id="KW-0067">ATP-binding</keyword>
<keyword id="KW-0131">Cell cycle</keyword>
<keyword id="KW-0132">Cell division</keyword>
<keyword id="KW-0133">Cell shape</keyword>
<keyword id="KW-0961">Cell wall biogenesis/degradation</keyword>
<keyword id="KW-0963">Cytoplasm</keyword>
<keyword id="KW-0436">Ligase</keyword>
<keyword id="KW-0547">Nucleotide-binding</keyword>
<keyword id="KW-0573">Peptidoglycan synthesis</keyword>
<protein>
    <recommendedName>
        <fullName evidence="1">UDP-N-acetylmuramoylalanine--D-glutamate ligase</fullName>
        <ecNumber evidence="1">6.3.2.9</ecNumber>
    </recommendedName>
    <alternativeName>
        <fullName evidence="1">D-glutamic acid-adding enzyme</fullName>
    </alternativeName>
    <alternativeName>
        <fullName evidence="1">UDP-N-acetylmuramoyl-L-alanyl-D-glutamate synthetase</fullName>
    </alternativeName>
</protein>
<accession>Q1Q883</accession>
<comment type="function">
    <text evidence="1">Cell wall formation. Catalyzes the addition of glutamate to the nucleotide precursor UDP-N-acetylmuramoyl-L-alanine (UMA).</text>
</comment>
<comment type="catalytic activity">
    <reaction evidence="1">
        <text>UDP-N-acetyl-alpha-D-muramoyl-L-alanine + D-glutamate + ATP = UDP-N-acetyl-alpha-D-muramoyl-L-alanyl-D-glutamate + ADP + phosphate + H(+)</text>
        <dbReference type="Rhea" id="RHEA:16429"/>
        <dbReference type="ChEBI" id="CHEBI:15378"/>
        <dbReference type="ChEBI" id="CHEBI:29986"/>
        <dbReference type="ChEBI" id="CHEBI:30616"/>
        <dbReference type="ChEBI" id="CHEBI:43474"/>
        <dbReference type="ChEBI" id="CHEBI:83898"/>
        <dbReference type="ChEBI" id="CHEBI:83900"/>
        <dbReference type="ChEBI" id="CHEBI:456216"/>
        <dbReference type="EC" id="6.3.2.9"/>
    </reaction>
</comment>
<comment type="pathway">
    <text evidence="1">Cell wall biogenesis; peptidoglycan biosynthesis.</text>
</comment>
<comment type="subcellular location">
    <subcellularLocation>
        <location evidence="1">Cytoplasm</location>
    </subcellularLocation>
</comment>
<comment type="similarity">
    <text evidence="1">Belongs to the MurCDEF family.</text>
</comment>
<name>MURD_PSYCK</name>
<proteinExistence type="inferred from homology"/>